<sequence>MAMAMRSTFAARVGAKPAVRGARPASRMSCMAYKVTLKTPSGDKTIECPADTYILDAAEEAGLDLPYSCRAGACSSCAGKVAAGTVDQSDQSFLDDAQMGNGFVLTCVAYPTSDCTIQTHQEEALY</sequence>
<reference key="1">
    <citation type="journal article" date="1993" name="Plant Physiol.">
        <title>A cDNA clone encoding Chlamydomonas reinhardtii preferredoxin.</title>
        <authorList>
            <person name="Stein M."/>
            <person name="Jacquot J.-P."/>
            <person name="Miginiac-Maslow M."/>
        </authorList>
    </citation>
    <scope>NUCLEOTIDE SEQUENCE [MRNA]</scope>
</reference>
<reference key="2">
    <citation type="online journal article" date="1995" name="Plant Gene Register">
        <title>Cloning and sequencing of a ferredoxin gene from Chlamydomonas reinhardtii.</title>
        <authorList>
            <person name="Stein M."/>
            <person name="Chedozeau B."/>
            <person name="Jacquot J.-P."/>
        </authorList>
        <locator>PGR95-065</locator>
    </citation>
    <scope>NUCLEOTIDE SEQUENCE</scope>
</reference>
<reference key="3">
    <citation type="journal article" date="1988" name="Eur. J. Biochem.">
        <title>Purification, properties and complete amino acid sequence of the ferredoxin from a green alga, Chlamydomonas reinhardtii.</title>
        <authorList>
            <person name="Schmitter J.-M."/>
            <person name="Jacquot J.-P."/>
            <person name="Lamotte-Guery F."/>
            <person name="Beauvallet C."/>
            <person name="Dutka S."/>
            <person name="Gadal P."/>
            <person name="Decottignies P."/>
        </authorList>
    </citation>
    <scope>PROTEIN SEQUENCE OF 33-126</scope>
</reference>
<reference key="4">
    <citation type="journal article" date="1994" name="FEBS Lett.">
        <title>NMR structures of ferredoxin chloroplastic transit peptide from Chlamydomonas reinhardtii promoted by trifluoroethanol in aqueous solution.</title>
        <authorList>
            <person name="Lancelin J.-M."/>
            <person name="Bally I."/>
            <person name="Arlaud G.J."/>
            <person name="Blackledge M."/>
            <person name="Gans P."/>
            <person name="Stein M."/>
            <person name="Jacquot J.-P."/>
        </authorList>
    </citation>
    <scope>STRUCTURE BY NMR OF 1-32</scope>
</reference>
<accession>P07839</accession>
<gene>
    <name type="primary">PETF</name>
</gene>
<organism>
    <name type="scientific">Chlamydomonas reinhardtii</name>
    <name type="common">Chlamydomonas smithii</name>
    <dbReference type="NCBI Taxonomy" id="3055"/>
    <lineage>
        <taxon>Eukaryota</taxon>
        <taxon>Viridiplantae</taxon>
        <taxon>Chlorophyta</taxon>
        <taxon>core chlorophytes</taxon>
        <taxon>Chlorophyceae</taxon>
        <taxon>CS clade</taxon>
        <taxon>Chlamydomonadales</taxon>
        <taxon>Chlamydomonadaceae</taxon>
        <taxon>Chlamydomonas</taxon>
    </lineage>
</organism>
<keyword id="KW-0001">2Fe-2S</keyword>
<keyword id="KW-0002">3D-structure</keyword>
<keyword id="KW-0150">Chloroplast</keyword>
<keyword id="KW-0903">Direct protein sequencing</keyword>
<keyword id="KW-0249">Electron transport</keyword>
<keyword id="KW-0408">Iron</keyword>
<keyword id="KW-0411">Iron-sulfur</keyword>
<keyword id="KW-0479">Metal-binding</keyword>
<keyword id="KW-0934">Plastid</keyword>
<keyword id="KW-0809">Transit peptide</keyword>
<keyword id="KW-0813">Transport</keyword>
<comment type="function">
    <text>Ferredoxins are iron-sulfur proteins that transfer electrons in a wide variety of metabolic reactions.</text>
</comment>
<comment type="cofactor">
    <cofactor>
        <name>[2Fe-2S] cluster</name>
        <dbReference type="ChEBI" id="CHEBI:190135"/>
    </cofactor>
    <text>Binds 1 [2Fe-2S] cluster.</text>
</comment>
<comment type="subunit">
    <text evidence="1">Forms a complex with heterodimeric ferredoxin-thioredoxin reductase (FTR) and thioredoxin.</text>
</comment>
<comment type="subcellular location">
    <subcellularLocation>
        <location>Plastid</location>
        <location>Chloroplast</location>
    </subcellularLocation>
</comment>
<comment type="similarity">
    <text evidence="4">Belongs to the 2Fe2S plant-type ferredoxin family.</text>
</comment>
<dbReference type="EMBL" id="U29516">
    <property type="protein sequence ID" value="AAC49171.1"/>
    <property type="molecule type" value="Genomic_DNA"/>
</dbReference>
<dbReference type="EMBL" id="L10349">
    <property type="protein sequence ID" value="AAA33085.1"/>
    <property type="molecule type" value="mRNA"/>
</dbReference>
<dbReference type="PIR" id="T08054">
    <property type="entry name" value="FEKM"/>
</dbReference>
<dbReference type="RefSeq" id="XP_001692808.1">
    <property type="nucleotide sequence ID" value="XM_001692756.1"/>
</dbReference>
<dbReference type="PDB" id="1FCT">
    <property type="method" value="NMR"/>
    <property type="chains" value="A=1-32"/>
</dbReference>
<dbReference type="PDB" id="2MH7">
    <property type="method" value="NMR"/>
    <property type="chains" value="A=33-126"/>
</dbReference>
<dbReference type="PDB" id="2N0S">
    <property type="method" value="NMR"/>
    <property type="chains" value="B=33-126"/>
</dbReference>
<dbReference type="PDB" id="6KUM">
    <property type="method" value="X-ray"/>
    <property type="resolution" value="1.40 A"/>
    <property type="chains" value="A/B=32-126"/>
</dbReference>
<dbReference type="PDB" id="6KV0">
    <property type="method" value="X-ray"/>
    <property type="resolution" value="1.40 A"/>
    <property type="chains" value="A/B=32-126"/>
</dbReference>
<dbReference type="PDB" id="6LK1">
    <property type="method" value="X-ray"/>
    <property type="resolution" value="0.90 A"/>
    <property type="chains" value="A/B=32-126"/>
</dbReference>
<dbReference type="PDB" id="7AKT">
    <property type="method" value="X-ray"/>
    <property type="resolution" value="1.11 A"/>
    <property type="chains" value="A=33-126"/>
</dbReference>
<dbReference type="PDB" id="7WZN">
    <property type="method" value="EM"/>
    <property type="resolution" value="4.90 A"/>
    <property type="chains" value="G=1-126"/>
</dbReference>
<dbReference type="PDBsum" id="1FCT"/>
<dbReference type="PDBsum" id="2MH7"/>
<dbReference type="PDBsum" id="2N0S"/>
<dbReference type="PDBsum" id="6KUM"/>
<dbReference type="PDBsum" id="6KV0"/>
<dbReference type="PDBsum" id="6LK1"/>
<dbReference type="PDBsum" id="7AKT"/>
<dbReference type="PDBsum" id="7WZN"/>
<dbReference type="BMRB" id="P07839"/>
<dbReference type="EMDB" id="EMD-32907"/>
<dbReference type="SMR" id="P07839"/>
<dbReference type="PaxDb" id="3055-EDP03827"/>
<dbReference type="EnsemblPlants" id="PNW73294">
    <property type="protein sequence ID" value="PNW73294"/>
    <property type="gene ID" value="CHLRE_14g626700v5"/>
</dbReference>
<dbReference type="Gramene" id="PNW73294">
    <property type="protein sequence ID" value="PNW73294"/>
    <property type="gene ID" value="CHLRE_14g626700v5"/>
</dbReference>
<dbReference type="KEGG" id="cre:CHLRE_14g626700v5"/>
<dbReference type="eggNOG" id="ENOG502S3RJ">
    <property type="taxonomic scope" value="Eukaryota"/>
</dbReference>
<dbReference type="HOGENOM" id="CLU_082632_1_1_1"/>
<dbReference type="OMA" id="ADCTIKA"/>
<dbReference type="OrthoDB" id="1885901at2759"/>
<dbReference type="EvolutionaryTrace" id="P07839"/>
<dbReference type="GO" id="GO:0009507">
    <property type="term" value="C:chloroplast"/>
    <property type="evidence" value="ECO:0007669"/>
    <property type="project" value="UniProtKB-SubCell"/>
</dbReference>
<dbReference type="GO" id="GO:0051537">
    <property type="term" value="F:2 iron, 2 sulfur cluster binding"/>
    <property type="evidence" value="ECO:0007669"/>
    <property type="project" value="UniProtKB-KW"/>
</dbReference>
<dbReference type="GO" id="GO:0009055">
    <property type="term" value="F:electron transfer activity"/>
    <property type="evidence" value="ECO:0007669"/>
    <property type="project" value="InterPro"/>
</dbReference>
<dbReference type="GO" id="GO:0051536">
    <property type="term" value="F:iron-sulfur cluster binding"/>
    <property type="evidence" value="ECO:0000314"/>
    <property type="project" value="UniProtKB"/>
</dbReference>
<dbReference type="GO" id="GO:0046872">
    <property type="term" value="F:metal ion binding"/>
    <property type="evidence" value="ECO:0007669"/>
    <property type="project" value="UniProtKB-KW"/>
</dbReference>
<dbReference type="GO" id="GO:0022900">
    <property type="term" value="P:electron transport chain"/>
    <property type="evidence" value="ECO:0007669"/>
    <property type="project" value="InterPro"/>
</dbReference>
<dbReference type="CDD" id="cd00207">
    <property type="entry name" value="fer2"/>
    <property type="match status" value="1"/>
</dbReference>
<dbReference type="FunFam" id="3.10.20.30:FF:000014">
    <property type="entry name" value="Ferredoxin"/>
    <property type="match status" value="1"/>
</dbReference>
<dbReference type="Gene3D" id="3.10.20.30">
    <property type="match status" value="1"/>
</dbReference>
<dbReference type="InterPro" id="IPR036010">
    <property type="entry name" value="2Fe-2S_ferredoxin-like_sf"/>
</dbReference>
<dbReference type="InterPro" id="IPR001041">
    <property type="entry name" value="2Fe-2S_ferredoxin-type"/>
</dbReference>
<dbReference type="InterPro" id="IPR006058">
    <property type="entry name" value="2Fe2S_fd_BS"/>
</dbReference>
<dbReference type="InterPro" id="IPR012675">
    <property type="entry name" value="Beta-grasp_dom_sf"/>
</dbReference>
<dbReference type="InterPro" id="IPR010241">
    <property type="entry name" value="Fd_pln"/>
</dbReference>
<dbReference type="InterPro" id="IPR023383">
    <property type="entry name" value="Ferredoxin_transit_pept"/>
</dbReference>
<dbReference type="NCBIfam" id="TIGR02008">
    <property type="entry name" value="fdx_plant"/>
    <property type="match status" value="1"/>
</dbReference>
<dbReference type="PANTHER" id="PTHR43112">
    <property type="entry name" value="FERREDOXIN"/>
    <property type="match status" value="1"/>
</dbReference>
<dbReference type="PANTHER" id="PTHR43112:SF3">
    <property type="entry name" value="FERREDOXIN-2, CHLOROPLASTIC"/>
    <property type="match status" value="1"/>
</dbReference>
<dbReference type="Pfam" id="PF11591">
    <property type="entry name" value="2Fe-2S_Ferredox"/>
    <property type="match status" value="1"/>
</dbReference>
<dbReference type="Pfam" id="PF00111">
    <property type="entry name" value="Fer2"/>
    <property type="match status" value="1"/>
</dbReference>
<dbReference type="SUPFAM" id="SSF54292">
    <property type="entry name" value="2Fe-2S ferredoxin-like"/>
    <property type="match status" value="1"/>
</dbReference>
<dbReference type="PROSITE" id="PS00197">
    <property type="entry name" value="2FE2S_FER_1"/>
    <property type="match status" value="1"/>
</dbReference>
<dbReference type="PROSITE" id="PS51085">
    <property type="entry name" value="2FE2S_FER_2"/>
    <property type="match status" value="1"/>
</dbReference>
<evidence type="ECO:0000250" key="1"/>
<evidence type="ECO:0000255" key="2">
    <source>
        <dbReference type="PROSITE-ProRule" id="PRU00465"/>
    </source>
</evidence>
<evidence type="ECO:0000269" key="3">
    <source>
    </source>
</evidence>
<evidence type="ECO:0000305" key="4"/>
<evidence type="ECO:0007829" key="5">
    <source>
        <dbReference type="PDB" id="1FCT"/>
    </source>
</evidence>
<evidence type="ECO:0007829" key="6">
    <source>
        <dbReference type="PDB" id="2N0S"/>
    </source>
</evidence>
<evidence type="ECO:0007829" key="7">
    <source>
        <dbReference type="PDB" id="6KUM"/>
    </source>
</evidence>
<evidence type="ECO:0007829" key="8">
    <source>
        <dbReference type="PDB" id="6LK1"/>
    </source>
</evidence>
<name>FER_CHLRE</name>
<proteinExistence type="evidence at protein level"/>
<feature type="transit peptide" description="Chloroplast" evidence="3">
    <location>
        <begin position="1"/>
        <end position="32"/>
    </location>
</feature>
<feature type="chain" id="PRO_0000008828" description="Ferredoxin, chloroplastic">
    <location>
        <begin position="33"/>
        <end position="126"/>
    </location>
</feature>
<feature type="domain" description="2Fe-2S ferredoxin-type" evidence="2">
    <location>
        <begin position="33"/>
        <end position="123"/>
    </location>
</feature>
<feature type="binding site">
    <location>
        <position position="69"/>
    </location>
    <ligand>
        <name>[2Fe-2S] cluster</name>
        <dbReference type="ChEBI" id="CHEBI:190135"/>
    </ligand>
</feature>
<feature type="binding site">
    <location>
        <position position="74"/>
    </location>
    <ligand>
        <name>[2Fe-2S] cluster</name>
        <dbReference type="ChEBI" id="CHEBI:190135"/>
    </ligand>
</feature>
<feature type="binding site">
    <location>
        <position position="77"/>
    </location>
    <ligand>
        <name>[2Fe-2S] cluster</name>
        <dbReference type="ChEBI" id="CHEBI:190135"/>
    </ligand>
</feature>
<feature type="binding site">
    <location>
        <position position="107"/>
    </location>
    <ligand>
        <name>[2Fe-2S] cluster</name>
        <dbReference type="ChEBI" id="CHEBI:190135"/>
    </ligand>
</feature>
<feature type="helix" evidence="5">
    <location>
        <begin position="3"/>
        <end position="12"/>
    </location>
</feature>
<feature type="helix" evidence="5">
    <location>
        <begin position="16"/>
        <end position="18"/>
    </location>
</feature>
<feature type="turn" evidence="5">
    <location>
        <begin position="19"/>
        <end position="22"/>
    </location>
</feature>
<feature type="strand" evidence="5">
    <location>
        <begin position="23"/>
        <end position="25"/>
    </location>
</feature>
<feature type="strand" evidence="8">
    <location>
        <begin position="33"/>
        <end position="39"/>
    </location>
</feature>
<feature type="strand" evidence="8">
    <location>
        <begin position="42"/>
        <end position="48"/>
    </location>
</feature>
<feature type="strand" evidence="6">
    <location>
        <begin position="50"/>
        <end position="52"/>
    </location>
</feature>
<feature type="helix" evidence="8">
    <location>
        <begin position="54"/>
        <end position="60"/>
    </location>
</feature>
<feature type="strand" evidence="7">
    <location>
        <begin position="67"/>
        <end position="69"/>
    </location>
</feature>
<feature type="strand" evidence="8">
    <location>
        <begin position="71"/>
        <end position="75"/>
    </location>
</feature>
<feature type="strand" evidence="8">
    <location>
        <begin position="78"/>
        <end position="84"/>
    </location>
</feature>
<feature type="strand" evidence="6">
    <location>
        <begin position="86"/>
        <end position="90"/>
    </location>
</feature>
<feature type="helix" evidence="8">
    <location>
        <begin position="96"/>
        <end position="100"/>
    </location>
</feature>
<feature type="strand" evidence="8">
    <location>
        <begin position="103"/>
        <end position="105"/>
    </location>
</feature>
<feature type="helix" evidence="8">
    <location>
        <begin position="106"/>
        <end position="108"/>
    </location>
</feature>
<feature type="strand" evidence="8">
    <location>
        <begin position="110"/>
        <end position="118"/>
    </location>
</feature>
<feature type="helix" evidence="8">
    <location>
        <begin position="122"/>
        <end position="124"/>
    </location>
</feature>
<protein>
    <recommendedName>
        <fullName>Ferredoxin, chloroplastic</fullName>
    </recommendedName>
</protein>